<evidence type="ECO:0000255" key="1"/>
<evidence type="ECO:0000256" key="2">
    <source>
        <dbReference type="SAM" id="MobiDB-lite"/>
    </source>
</evidence>
<evidence type="ECO:0000269" key="3">
    <source>
    </source>
</evidence>
<evidence type="ECO:0000269" key="4">
    <source>
    </source>
</evidence>
<evidence type="ECO:0000305" key="5"/>
<evidence type="ECO:0007744" key="6">
    <source>
    </source>
</evidence>
<evidence type="ECO:0007744" key="7">
    <source>
    </source>
</evidence>
<evidence type="ECO:0007744" key="8">
    <source>
    </source>
</evidence>
<organism>
    <name type="scientific">Saccharomyces cerevisiae (strain ATCC 204508 / S288c)</name>
    <name type="common">Baker's yeast</name>
    <dbReference type="NCBI Taxonomy" id="559292"/>
    <lineage>
        <taxon>Eukaryota</taxon>
        <taxon>Fungi</taxon>
        <taxon>Dikarya</taxon>
        <taxon>Ascomycota</taxon>
        <taxon>Saccharomycotina</taxon>
        <taxon>Saccharomycetes</taxon>
        <taxon>Saccharomycetales</taxon>
        <taxon>Saccharomycetaceae</taxon>
        <taxon>Saccharomyces</taxon>
    </lineage>
</organism>
<feature type="chain" id="PRO_0000196286" description="Protein YRO2">
    <location>
        <begin position="1"/>
        <end position="344"/>
    </location>
</feature>
<feature type="topological domain" description="Extracellular" evidence="1">
    <location>
        <begin position="1"/>
        <end position="34"/>
    </location>
</feature>
<feature type="transmembrane region" description="Helical" evidence="1">
    <location>
        <begin position="35"/>
        <end position="55"/>
    </location>
</feature>
<feature type="topological domain" description="Cytoplasmic" evidence="1">
    <location>
        <begin position="56"/>
        <end position="62"/>
    </location>
</feature>
<feature type="transmembrane region" description="Helical" evidence="1">
    <location>
        <begin position="63"/>
        <end position="83"/>
    </location>
</feature>
<feature type="topological domain" description="Extracellular" evidence="1">
    <location>
        <begin position="84"/>
        <end position="119"/>
    </location>
</feature>
<feature type="transmembrane region" description="Helical" evidence="1">
    <location>
        <begin position="120"/>
        <end position="140"/>
    </location>
</feature>
<feature type="topological domain" description="Cytoplasmic" evidence="1">
    <location>
        <position position="141"/>
    </location>
</feature>
<feature type="transmembrane region" description="Helical" evidence="1">
    <location>
        <begin position="142"/>
        <end position="162"/>
    </location>
</feature>
<feature type="topological domain" description="Extracellular" evidence="1">
    <location>
        <begin position="163"/>
        <end position="172"/>
    </location>
</feature>
<feature type="transmembrane region" description="Helical" evidence="1">
    <location>
        <begin position="173"/>
        <end position="193"/>
    </location>
</feature>
<feature type="topological domain" description="Cytoplasmic" evidence="1">
    <location>
        <begin position="194"/>
        <end position="202"/>
    </location>
</feature>
<feature type="transmembrane region" description="Helical" evidence="1">
    <location>
        <begin position="203"/>
        <end position="223"/>
    </location>
</feature>
<feature type="topological domain" description="Extracellular" evidence="1">
    <location>
        <begin position="224"/>
        <end position="238"/>
    </location>
</feature>
<feature type="transmembrane region" description="Helical" evidence="1">
    <location>
        <begin position="239"/>
        <end position="259"/>
    </location>
</feature>
<feature type="topological domain" description="Cytoplasmic" evidence="1">
    <location>
        <begin position="260"/>
        <end position="344"/>
    </location>
</feature>
<feature type="region of interest" description="Disordered" evidence="2">
    <location>
        <begin position="282"/>
        <end position="344"/>
    </location>
</feature>
<feature type="compositionally biased region" description="Basic and acidic residues" evidence="2">
    <location>
        <begin position="297"/>
        <end position="306"/>
    </location>
</feature>
<feature type="compositionally biased region" description="Basic residues" evidence="2">
    <location>
        <begin position="307"/>
        <end position="330"/>
    </location>
</feature>
<feature type="compositionally biased region" description="Acidic residues" evidence="2">
    <location>
        <begin position="334"/>
        <end position="344"/>
    </location>
</feature>
<feature type="modified residue" description="Phosphoserine" evidence="7">
    <location>
        <position position="293"/>
    </location>
</feature>
<feature type="modified residue" description="Phosphothreonine" evidence="6 7 8">
    <location>
        <position position="341"/>
    </location>
</feature>
<feature type="modified residue" description="Phosphoserine" evidence="6 7">
    <location>
        <position position="343"/>
    </location>
</feature>
<feature type="cross-link" description="Glycyl lysine isopeptide (Lys-Gly) (interchain with G-Cter in ubiquitin)" evidence="3">
    <location>
        <position position="286"/>
    </location>
</feature>
<sequence>MSDYVELLKRGGNEAIKINPPTGADFHITSRGSDWLFTVFCVNLLFGVILVPLMFRKPVKDRFVYYTAIAPNLFMSIAYFTMASNLGWIPVRAKYNHVQTSTQKEHPGYRQIFYARYVGWFLAFPWPIIQMSLLGGTPLWQIAFNVGMTEIFTVCWLIAACVHSTYKWGYYTIGIGAAIVVCISLMTTTFNLVKARGKDVSNVFITFMSVIMFLWLIAYPTCFGITDGGNVLQPDSATIFYGIIDLLILSILPVLFMPLANYLGIERLGLIFDEEPAEHVGPVAEKKMPSPASFKSSDSDSSIKEKLKLKKKHKKDKKKAKKAKKAKKAKKAQEEEEDVATDSE</sequence>
<dbReference type="EMBL" id="Z46260">
    <property type="protein sequence ID" value="CAA86397.1"/>
    <property type="molecule type" value="Genomic_DNA"/>
</dbReference>
<dbReference type="EMBL" id="Z35923">
    <property type="protein sequence ID" value="CAA84997.1"/>
    <property type="molecule type" value="Genomic_DNA"/>
</dbReference>
<dbReference type="EMBL" id="BK006936">
    <property type="protein sequence ID" value="DAA07173.1"/>
    <property type="molecule type" value="Genomic_DNA"/>
</dbReference>
<dbReference type="PIR" id="S45912">
    <property type="entry name" value="S45912"/>
</dbReference>
<dbReference type="RefSeq" id="NP_009610.1">
    <property type="nucleotide sequence ID" value="NM_001178402.1"/>
</dbReference>
<dbReference type="SMR" id="P38079"/>
<dbReference type="BioGRID" id="32755">
    <property type="interactions" value="60"/>
</dbReference>
<dbReference type="DIP" id="DIP-4184N"/>
<dbReference type="FunCoup" id="P38079">
    <property type="interactions" value="119"/>
</dbReference>
<dbReference type="IntAct" id="P38079">
    <property type="interactions" value="12"/>
</dbReference>
<dbReference type="MINT" id="P38079"/>
<dbReference type="STRING" id="4932.YBR054W"/>
<dbReference type="TCDB" id="3.E.1.4.8">
    <property type="family name" value="the ion-translocating microbial rhodopsin (mr) family"/>
</dbReference>
<dbReference type="iPTMnet" id="P38079"/>
<dbReference type="PaxDb" id="4932-YBR054W"/>
<dbReference type="PeptideAtlas" id="P38079"/>
<dbReference type="EnsemblFungi" id="YBR054W_mRNA">
    <property type="protein sequence ID" value="YBR054W"/>
    <property type="gene ID" value="YBR054W"/>
</dbReference>
<dbReference type="GeneID" id="852343"/>
<dbReference type="KEGG" id="sce:YBR054W"/>
<dbReference type="AGR" id="SGD:S000000258"/>
<dbReference type="SGD" id="S000000258">
    <property type="gene designation" value="YRO2"/>
</dbReference>
<dbReference type="VEuPathDB" id="FungiDB:YBR054W"/>
<dbReference type="eggNOG" id="ENOG502QQVQ">
    <property type="taxonomic scope" value="Eukaryota"/>
</dbReference>
<dbReference type="GeneTree" id="ENSGT00940000176735"/>
<dbReference type="HOGENOM" id="CLU_054785_1_0_1"/>
<dbReference type="InParanoid" id="P38079"/>
<dbReference type="OMA" id="GHWNIDP"/>
<dbReference type="OrthoDB" id="536545at2759"/>
<dbReference type="BioCyc" id="YEAST:G3O-29025-MONOMER"/>
<dbReference type="BioGRID-ORCS" id="852343">
    <property type="hits" value="0 hits in 10 CRISPR screens"/>
</dbReference>
<dbReference type="PRO" id="PR:P38079"/>
<dbReference type="Proteomes" id="UP000002311">
    <property type="component" value="Chromosome II"/>
</dbReference>
<dbReference type="RNAct" id="P38079">
    <property type="molecule type" value="protein"/>
</dbReference>
<dbReference type="GO" id="GO:0005933">
    <property type="term" value="C:cellular bud"/>
    <property type="evidence" value="ECO:0007005"/>
    <property type="project" value="SGD"/>
</dbReference>
<dbReference type="GO" id="GO:0005783">
    <property type="term" value="C:endoplasmic reticulum"/>
    <property type="evidence" value="ECO:0007005"/>
    <property type="project" value="SGD"/>
</dbReference>
<dbReference type="GO" id="GO:0005739">
    <property type="term" value="C:mitochondrion"/>
    <property type="evidence" value="ECO:0007005"/>
    <property type="project" value="SGD"/>
</dbReference>
<dbReference type="GO" id="GO:0005886">
    <property type="term" value="C:plasma membrane"/>
    <property type="evidence" value="ECO:0000314"/>
    <property type="project" value="SGD"/>
</dbReference>
<dbReference type="CDD" id="cd15239">
    <property type="entry name" value="7tm_YRO2_fungal-like"/>
    <property type="match status" value="1"/>
</dbReference>
<dbReference type="FunFam" id="1.20.1070.10:FF:000160">
    <property type="entry name" value="Related to Opsin-1"/>
    <property type="match status" value="1"/>
</dbReference>
<dbReference type="Gene3D" id="1.20.1070.10">
    <property type="entry name" value="Rhodopsin 7-helix transmembrane proteins"/>
    <property type="match status" value="1"/>
</dbReference>
<dbReference type="InterPro" id="IPR001425">
    <property type="entry name" value="Arc/bac/fun_rhodopsins"/>
</dbReference>
<dbReference type="InterPro" id="IPR043476">
    <property type="entry name" value="Yro2-like_7TM"/>
</dbReference>
<dbReference type="PANTHER" id="PTHR28286">
    <property type="match status" value="1"/>
</dbReference>
<dbReference type="PANTHER" id="PTHR28286:SF1">
    <property type="entry name" value="30 KDA HEAT SHOCK PROTEIN-RELATED"/>
    <property type="match status" value="1"/>
</dbReference>
<dbReference type="Pfam" id="PF01036">
    <property type="entry name" value="Bac_rhodopsin"/>
    <property type="match status" value="1"/>
</dbReference>
<dbReference type="SMART" id="SM01021">
    <property type="entry name" value="Bac_rhodopsin"/>
    <property type="match status" value="1"/>
</dbReference>
<dbReference type="SUPFAM" id="SSF81321">
    <property type="entry name" value="Family A G protein-coupled receptor-like"/>
    <property type="match status" value="1"/>
</dbReference>
<comment type="subcellular location">
    <subcellularLocation>
        <location>Membrane</location>
        <topology>Multi-pass membrane protein</topology>
    </subcellularLocation>
</comment>
<comment type="miscellaneous">
    <text evidence="4">Present with 1950 molecules/cell in log phase SD medium.</text>
</comment>
<comment type="similarity">
    <text evidence="5">Belongs to the archaeal/bacterial/fungal opsin family.</text>
</comment>
<protein>
    <recommendedName>
        <fullName>Protein YRO2</fullName>
    </recommendedName>
</protein>
<name>YRO2_YEAST</name>
<reference key="1">
    <citation type="journal article" date="1995" name="Yeast">
        <title>Sequence and analysis of 24 kb on chromosome II of Saccharomyces cerevisiae.</title>
        <authorList>
            <person name="Aljinovic G."/>
            <person name="Pohl T.M."/>
        </authorList>
    </citation>
    <scope>NUCLEOTIDE SEQUENCE [GENOMIC DNA]</scope>
    <source>
        <strain>ATCC 204508 / S288c</strain>
    </source>
</reference>
<reference key="2">
    <citation type="journal article" date="1994" name="EMBO J.">
        <title>Complete DNA sequence of yeast chromosome II.</title>
        <authorList>
            <person name="Feldmann H."/>
            <person name="Aigle M."/>
            <person name="Aljinovic G."/>
            <person name="Andre B."/>
            <person name="Baclet M.C."/>
            <person name="Barthe C."/>
            <person name="Baur A."/>
            <person name="Becam A.-M."/>
            <person name="Biteau N."/>
            <person name="Boles E."/>
            <person name="Brandt T."/>
            <person name="Brendel M."/>
            <person name="Brueckner M."/>
            <person name="Bussereau F."/>
            <person name="Christiansen C."/>
            <person name="Contreras R."/>
            <person name="Crouzet M."/>
            <person name="Cziepluch C."/>
            <person name="Demolis N."/>
            <person name="Delaveau T."/>
            <person name="Doignon F."/>
            <person name="Domdey H."/>
            <person name="Duesterhus S."/>
            <person name="Dubois E."/>
            <person name="Dujon B."/>
            <person name="El Bakkoury M."/>
            <person name="Entian K.-D."/>
            <person name="Feuermann M."/>
            <person name="Fiers W."/>
            <person name="Fobo G.M."/>
            <person name="Fritz C."/>
            <person name="Gassenhuber J."/>
            <person name="Glansdorff N."/>
            <person name="Goffeau A."/>
            <person name="Grivell L.A."/>
            <person name="de Haan M."/>
            <person name="Hein C."/>
            <person name="Herbert C.J."/>
            <person name="Hollenberg C.P."/>
            <person name="Holmstroem K."/>
            <person name="Jacq C."/>
            <person name="Jacquet M."/>
            <person name="Jauniaux J.-C."/>
            <person name="Jonniaux J.-L."/>
            <person name="Kallesoee T."/>
            <person name="Kiesau P."/>
            <person name="Kirchrath L."/>
            <person name="Koetter P."/>
            <person name="Korol S."/>
            <person name="Liebl S."/>
            <person name="Logghe M."/>
            <person name="Lohan A.J.E."/>
            <person name="Louis E.J."/>
            <person name="Li Z.Y."/>
            <person name="Maat M.J."/>
            <person name="Mallet L."/>
            <person name="Mannhaupt G."/>
            <person name="Messenguy F."/>
            <person name="Miosga T."/>
            <person name="Molemans F."/>
            <person name="Mueller S."/>
            <person name="Nasr F."/>
            <person name="Obermaier B."/>
            <person name="Perea J."/>
            <person name="Pierard A."/>
            <person name="Piravandi E."/>
            <person name="Pohl F.M."/>
            <person name="Pohl T.M."/>
            <person name="Potier S."/>
            <person name="Proft M."/>
            <person name="Purnelle B."/>
            <person name="Ramezani Rad M."/>
            <person name="Rieger M."/>
            <person name="Rose M."/>
            <person name="Schaaff-Gerstenschlaeger I."/>
            <person name="Scherens B."/>
            <person name="Schwarzlose C."/>
            <person name="Skala J."/>
            <person name="Slonimski P.P."/>
            <person name="Smits P.H.M."/>
            <person name="Souciet J.-L."/>
            <person name="Steensma H.Y."/>
            <person name="Stucka R."/>
            <person name="Urrestarazu L.A."/>
            <person name="van der Aart Q.J.M."/>
            <person name="Van Dyck L."/>
            <person name="Vassarotti A."/>
            <person name="Vetter I."/>
            <person name="Vierendeels F."/>
            <person name="Vissers S."/>
            <person name="Wagner G."/>
            <person name="de Wergifosse P."/>
            <person name="Wolfe K.H."/>
            <person name="Zagulski M."/>
            <person name="Zimmermann F.K."/>
            <person name="Mewes H.-W."/>
            <person name="Kleine K."/>
        </authorList>
    </citation>
    <scope>NUCLEOTIDE SEQUENCE [LARGE SCALE GENOMIC DNA]</scope>
    <source>
        <strain>ATCC 204508 / S288c</strain>
    </source>
</reference>
<reference key="3">
    <citation type="journal article" date="2014" name="G3 (Bethesda)">
        <title>The reference genome sequence of Saccharomyces cerevisiae: Then and now.</title>
        <authorList>
            <person name="Engel S.R."/>
            <person name="Dietrich F.S."/>
            <person name="Fisk D.G."/>
            <person name="Binkley G."/>
            <person name="Balakrishnan R."/>
            <person name="Costanzo M.C."/>
            <person name="Dwight S.S."/>
            <person name="Hitz B.C."/>
            <person name="Karra K."/>
            <person name="Nash R.S."/>
            <person name="Weng S."/>
            <person name="Wong E.D."/>
            <person name="Lloyd P."/>
            <person name="Skrzypek M.S."/>
            <person name="Miyasato S.R."/>
            <person name="Simison M."/>
            <person name="Cherry J.M."/>
        </authorList>
    </citation>
    <scope>GENOME REANNOTATION</scope>
    <source>
        <strain>ATCC 204508 / S288c</strain>
    </source>
</reference>
<reference key="4">
    <citation type="journal article" date="2003" name="Nature">
        <title>Global analysis of protein expression in yeast.</title>
        <authorList>
            <person name="Ghaemmaghami S."/>
            <person name="Huh W.-K."/>
            <person name="Bower K."/>
            <person name="Howson R.W."/>
            <person name="Belle A."/>
            <person name="Dephoure N."/>
            <person name="O'Shea E.K."/>
            <person name="Weissman J.S."/>
        </authorList>
    </citation>
    <scope>LEVEL OF PROTEIN EXPRESSION [LARGE SCALE ANALYSIS]</scope>
</reference>
<reference key="5">
    <citation type="journal article" date="2003" name="Nat. Biotechnol.">
        <title>A proteomics approach to understanding protein ubiquitination.</title>
        <authorList>
            <person name="Peng J."/>
            <person name="Schwartz D."/>
            <person name="Elias J.E."/>
            <person name="Thoreen C.C."/>
            <person name="Cheng D."/>
            <person name="Marsischky G."/>
            <person name="Roelofs J."/>
            <person name="Finley D."/>
            <person name="Gygi S.P."/>
        </authorList>
    </citation>
    <scope>UBIQUITINATION [LARGE SCALE ANALYSIS] AT LYS-286</scope>
    <scope>IDENTIFICATION BY MASS SPECTROMETRY</scope>
    <source>
        <strain>SUB592</strain>
    </source>
</reference>
<reference key="6">
    <citation type="journal article" date="2006" name="Proc. Natl. Acad. Sci. U.S.A.">
        <title>A global topology map of the Saccharomyces cerevisiae membrane proteome.</title>
        <authorList>
            <person name="Kim H."/>
            <person name="Melen K."/>
            <person name="Oesterberg M."/>
            <person name="von Heijne G."/>
        </authorList>
    </citation>
    <scope>TOPOLOGY [LARGE SCALE ANALYSIS]</scope>
    <source>
        <strain>ATCC 208353 / W303-1A</strain>
    </source>
</reference>
<reference key="7">
    <citation type="journal article" date="2007" name="Mol. Cell. Proteomics">
        <title>Profiling phosphoproteins of yeast mitochondria reveals a role of phosphorylation in assembly of the ATP synthase.</title>
        <authorList>
            <person name="Reinders J."/>
            <person name="Wagner K."/>
            <person name="Zahedi R.P."/>
            <person name="Stojanovski D."/>
            <person name="Eyrich B."/>
            <person name="van der Laan M."/>
            <person name="Rehling P."/>
            <person name="Sickmann A."/>
            <person name="Pfanner N."/>
            <person name="Meisinger C."/>
        </authorList>
    </citation>
    <scope>PHOSPHORYLATION [LARGE SCALE ANALYSIS] AT THR-341 AND SER-343</scope>
    <scope>IDENTIFICATION BY MASS SPECTROMETRY [LARGE SCALE ANALYSIS]</scope>
    <source>
        <strain>ATCC 76625 / YPH499</strain>
    </source>
</reference>
<reference key="8">
    <citation type="journal article" date="2008" name="Mol. Cell. Proteomics">
        <title>A multidimensional chromatography technology for in-depth phosphoproteome analysis.</title>
        <authorList>
            <person name="Albuquerque C.P."/>
            <person name="Smolka M.B."/>
            <person name="Payne S.H."/>
            <person name="Bafna V."/>
            <person name="Eng J."/>
            <person name="Zhou H."/>
        </authorList>
    </citation>
    <scope>PHOSPHORYLATION [LARGE SCALE ANALYSIS] AT SER-293; THR-341 AND SER-343</scope>
    <scope>IDENTIFICATION BY MASS SPECTROMETRY [LARGE SCALE ANALYSIS]</scope>
</reference>
<reference key="9">
    <citation type="journal article" date="2009" name="Science">
        <title>Global analysis of Cdk1 substrate phosphorylation sites provides insights into evolution.</title>
        <authorList>
            <person name="Holt L.J."/>
            <person name="Tuch B.B."/>
            <person name="Villen J."/>
            <person name="Johnson A.D."/>
            <person name="Gygi S.P."/>
            <person name="Morgan D.O."/>
        </authorList>
    </citation>
    <scope>PHOSPHORYLATION [LARGE SCALE ANALYSIS] AT THR-341</scope>
    <scope>IDENTIFICATION BY MASS SPECTROMETRY [LARGE SCALE ANALYSIS]</scope>
</reference>
<gene>
    <name type="primary">YRO2</name>
    <name type="ordered locus">YBR054W</name>
    <name type="ORF">YBR0507</name>
</gene>
<accession>P38079</accession>
<accession>D6VQ53</accession>
<proteinExistence type="evidence at protein level"/>
<keyword id="KW-1017">Isopeptide bond</keyword>
<keyword id="KW-0472">Membrane</keyword>
<keyword id="KW-0597">Phosphoprotein</keyword>
<keyword id="KW-1185">Reference proteome</keyword>
<keyword id="KW-0812">Transmembrane</keyword>
<keyword id="KW-1133">Transmembrane helix</keyword>
<keyword id="KW-0832">Ubl conjugation</keyword>